<organism>
    <name type="scientific">Chlorobium luteolum (strain DSM 273 / BCRC 81028 / 2530)</name>
    <name type="common">Pelodictyon luteolum</name>
    <dbReference type="NCBI Taxonomy" id="319225"/>
    <lineage>
        <taxon>Bacteria</taxon>
        <taxon>Pseudomonadati</taxon>
        <taxon>Chlorobiota</taxon>
        <taxon>Chlorobiia</taxon>
        <taxon>Chlorobiales</taxon>
        <taxon>Chlorobiaceae</taxon>
        <taxon>Chlorobium/Pelodictyon group</taxon>
        <taxon>Pelodictyon</taxon>
    </lineage>
</organism>
<comment type="function">
    <text evidence="1">Necessary for normal cell division and for the maintenance of normal septation.</text>
</comment>
<comment type="cofactor">
    <cofactor evidence="1">
        <name>Mg(2+)</name>
        <dbReference type="ChEBI" id="CHEBI:18420"/>
    </cofactor>
</comment>
<comment type="similarity">
    <text evidence="1">Belongs to the TRAFAC class TrmE-Era-EngA-EngB-Septin-like GTPase superfamily. EngB GTPase family.</text>
</comment>
<protein>
    <recommendedName>
        <fullName evidence="1">Probable GTP-binding protein EngB</fullName>
    </recommendedName>
</protein>
<name>ENGB_CHLL3</name>
<gene>
    <name evidence="1" type="primary">engB</name>
    <name type="ordered locus">Plut_0212</name>
</gene>
<accession>Q3B6D1</accession>
<sequence length="207" mass="22549">MKIINAAFIRSVSALQDLPDERVPEIVFAGRSNVGKSSLLNSLTGRKGLAKTSSTPGKTRLLNYFLINDDLYFVDIPGYGYAAVSHTEKDAWGRLLAGYVGGRQAIALVVLLLDSRHPAMESDREMMEFLAYHDRPYGIVLTKDDKLTQKERAKAKRVTASCALNAEFIVSYSSISGKGKKELLAHFDHYLSGESSGAGSDSAVTVT</sequence>
<proteinExistence type="inferred from homology"/>
<reference key="1">
    <citation type="submission" date="2005-08" db="EMBL/GenBank/DDBJ databases">
        <title>Complete sequence of Pelodictyon luteolum DSM 273.</title>
        <authorList>
            <consortium name="US DOE Joint Genome Institute"/>
            <person name="Copeland A."/>
            <person name="Lucas S."/>
            <person name="Lapidus A."/>
            <person name="Barry K."/>
            <person name="Detter J.C."/>
            <person name="Glavina T."/>
            <person name="Hammon N."/>
            <person name="Israni S."/>
            <person name="Pitluck S."/>
            <person name="Bryant D."/>
            <person name="Schmutz J."/>
            <person name="Larimer F."/>
            <person name="Land M."/>
            <person name="Kyrpides N."/>
            <person name="Ivanova N."/>
            <person name="Richardson P."/>
        </authorList>
    </citation>
    <scope>NUCLEOTIDE SEQUENCE [LARGE SCALE GENOMIC DNA]</scope>
    <source>
        <strain>DSM 273 / BCRC 81028 / 2530</strain>
    </source>
</reference>
<dbReference type="EMBL" id="CP000096">
    <property type="protein sequence ID" value="ABB23100.1"/>
    <property type="molecule type" value="Genomic_DNA"/>
</dbReference>
<dbReference type="RefSeq" id="WP_011356975.1">
    <property type="nucleotide sequence ID" value="NC_007512.1"/>
</dbReference>
<dbReference type="SMR" id="Q3B6D1"/>
<dbReference type="STRING" id="319225.Plut_0212"/>
<dbReference type="KEGG" id="plt:Plut_0212"/>
<dbReference type="eggNOG" id="COG0218">
    <property type="taxonomic scope" value="Bacteria"/>
</dbReference>
<dbReference type="HOGENOM" id="CLU_033732_3_0_10"/>
<dbReference type="OrthoDB" id="9804921at2"/>
<dbReference type="Proteomes" id="UP000002709">
    <property type="component" value="Chromosome"/>
</dbReference>
<dbReference type="GO" id="GO:0005829">
    <property type="term" value="C:cytosol"/>
    <property type="evidence" value="ECO:0007669"/>
    <property type="project" value="TreeGrafter"/>
</dbReference>
<dbReference type="GO" id="GO:0005525">
    <property type="term" value="F:GTP binding"/>
    <property type="evidence" value="ECO:0007669"/>
    <property type="project" value="UniProtKB-UniRule"/>
</dbReference>
<dbReference type="GO" id="GO:0046872">
    <property type="term" value="F:metal ion binding"/>
    <property type="evidence" value="ECO:0007669"/>
    <property type="project" value="UniProtKB-KW"/>
</dbReference>
<dbReference type="GO" id="GO:0000917">
    <property type="term" value="P:division septum assembly"/>
    <property type="evidence" value="ECO:0007669"/>
    <property type="project" value="UniProtKB-KW"/>
</dbReference>
<dbReference type="CDD" id="cd01876">
    <property type="entry name" value="YihA_EngB"/>
    <property type="match status" value="1"/>
</dbReference>
<dbReference type="Gene3D" id="3.40.50.300">
    <property type="entry name" value="P-loop containing nucleotide triphosphate hydrolases"/>
    <property type="match status" value="1"/>
</dbReference>
<dbReference type="HAMAP" id="MF_00321">
    <property type="entry name" value="GTPase_EngB"/>
    <property type="match status" value="1"/>
</dbReference>
<dbReference type="InterPro" id="IPR030393">
    <property type="entry name" value="G_ENGB_dom"/>
</dbReference>
<dbReference type="InterPro" id="IPR006073">
    <property type="entry name" value="GTP-bd"/>
</dbReference>
<dbReference type="InterPro" id="IPR019987">
    <property type="entry name" value="GTP-bd_ribosome_bio_YsxC"/>
</dbReference>
<dbReference type="InterPro" id="IPR027417">
    <property type="entry name" value="P-loop_NTPase"/>
</dbReference>
<dbReference type="NCBIfam" id="TIGR03598">
    <property type="entry name" value="GTPase_YsxC"/>
    <property type="match status" value="1"/>
</dbReference>
<dbReference type="PANTHER" id="PTHR11649:SF13">
    <property type="entry name" value="ENGB-TYPE G DOMAIN-CONTAINING PROTEIN"/>
    <property type="match status" value="1"/>
</dbReference>
<dbReference type="PANTHER" id="PTHR11649">
    <property type="entry name" value="MSS1/TRME-RELATED GTP-BINDING PROTEIN"/>
    <property type="match status" value="1"/>
</dbReference>
<dbReference type="Pfam" id="PF01926">
    <property type="entry name" value="MMR_HSR1"/>
    <property type="match status" value="1"/>
</dbReference>
<dbReference type="SUPFAM" id="SSF52540">
    <property type="entry name" value="P-loop containing nucleoside triphosphate hydrolases"/>
    <property type="match status" value="1"/>
</dbReference>
<dbReference type="PROSITE" id="PS51706">
    <property type="entry name" value="G_ENGB"/>
    <property type="match status" value="1"/>
</dbReference>
<keyword id="KW-0131">Cell cycle</keyword>
<keyword id="KW-0132">Cell division</keyword>
<keyword id="KW-0342">GTP-binding</keyword>
<keyword id="KW-0460">Magnesium</keyword>
<keyword id="KW-0479">Metal-binding</keyword>
<keyword id="KW-0547">Nucleotide-binding</keyword>
<keyword id="KW-1185">Reference proteome</keyword>
<keyword id="KW-0717">Septation</keyword>
<feature type="chain" id="PRO_0000266912" description="Probable GTP-binding protein EngB">
    <location>
        <begin position="1"/>
        <end position="207"/>
    </location>
</feature>
<feature type="domain" description="EngB-type G" evidence="1">
    <location>
        <begin position="22"/>
        <end position="193"/>
    </location>
</feature>
<feature type="binding site" evidence="1">
    <location>
        <begin position="30"/>
        <end position="37"/>
    </location>
    <ligand>
        <name>GTP</name>
        <dbReference type="ChEBI" id="CHEBI:37565"/>
    </ligand>
</feature>
<feature type="binding site" evidence="1">
    <location>
        <position position="37"/>
    </location>
    <ligand>
        <name>Mg(2+)</name>
        <dbReference type="ChEBI" id="CHEBI:18420"/>
    </ligand>
</feature>
<feature type="binding site" evidence="1">
    <location>
        <begin position="57"/>
        <end position="61"/>
    </location>
    <ligand>
        <name>GTP</name>
        <dbReference type="ChEBI" id="CHEBI:37565"/>
    </ligand>
</feature>
<feature type="binding site" evidence="1">
    <location>
        <position position="59"/>
    </location>
    <ligand>
        <name>Mg(2+)</name>
        <dbReference type="ChEBI" id="CHEBI:18420"/>
    </ligand>
</feature>
<feature type="binding site" evidence="1">
    <location>
        <begin position="75"/>
        <end position="78"/>
    </location>
    <ligand>
        <name>GTP</name>
        <dbReference type="ChEBI" id="CHEBI:37565"/>
    </ligand>
</feature>
<feature type="binding site" evidence="1">
    <location>
        <begin position="142"/>
        <end position="145"/>
    </location>
    <ligand>
        <name>GTP</name>
        <dbReference type="ChEBI" id="CHEBI:37565"/>
    </ligand>
</feature>
<feature type="binding site" evidence="1">
    <location>
        <begin position="172"/>
        <end position="174"/>
    </location>
    <ligand>
        <name>GTP</name>
        <dbReference type="ChEBI" id="CHEBI:37565"/>
    </ligand>
</feature>
<evidence type="ECO:0000255" key="1">
    <source>
        <dbReference type="HAMAP-Rule" id="MF_00321"/>
    </source>
</evidence>